<sequence length="309" mass="33117">MVKVYAPASSANMSVGFDVLGAAVTPVDGSLLGDVVSVDAAESFTLNNLGRFADKLPSAPRENIVYQCWERFCQELGKQIPVAMTLEKNMPIGSGLGSSACSVVAALVAMNEFCGKPLNDTRLLAIMGELEGRISGSIHYDNVAPCFLGGMQLMIEENGIISQQVPGFDEWLWVLAYPGINVSTAEARAILPAQYRRQDCIAHGRHLAGFIHACYSRQPQLAAKLMKDVIAEPYRARLLPGFSQARQAVAEIGALASGISGSGPTLFALCDKPDTAQRVADWLGKNYLQNQEGFVHICQLDTAGARVLG</sequence>
<reference key="1">
    <citation type="submission" date="2007-08" db="EMBL/GenBank/DDBJ databases">
        <authorList>
            <consortium name="The Citrobacter koseri Genome Sequencing Project"/>
            <person name="McClelland M."/>
            <person name="Sanderson E.K."/>
            <person name="Porwollik S."/>
            <person name="Spieth J."/>
            <person name="Clifton W.S."/>
            <person name="Latreille P."/>
            <person name="Courtney L."/>
            <person name="Wang C."/>
            <person name="Pepin K."/>
            <person name="Bhonagiri V."/>
            <person name="Nash W."/>
            <person name="Johnson M."/>
            <person name="Thiruvilangam P."/>
            <person name="Wilson R."/>
        </authorList>
    </citation>
    <scope>NUCLEOTIDE SEQUENCE [LARGE SCALE GENOMIC DNA]</scope>
    <source>
        <strain>ATCC BAA-895 / CDC 4225-83 / SGSC4696</strain>
    </source>
</reference>
<comment type="function">
    <text evidence="1">Catalyzes the ATP-dependent phosphorylation of L-homoserine to L-homoserine phosphate.</text>
</comment>
<comment type="catalytic activity">
    <reaction evidence="1">
        <text>L-homoserine + ATP = O-phospho-L-homoserine + ADP + H(+)</text>
        <dbReference type="Rhea" id="RHEA:13985"/>
        <dbReference type="ChEBI" id="CHEBI:15378"/>
        <dbReference type="ChEBI" id="CHEBI:30616"/>
        <dbReference type="ChEBI" id="CHEBI:57476"/>
        <dbReference type="ChEBI" id="CHEBI:57590"/>
        <dbReference type="ChEBI" id="CHEBI:456216"/>
        <dbReference type="EC" id="2.7.1.39"/>
    </reaction>
</comment>
<comment type="pathway">
    <text evidence="1">Amino-acid biosynthesis; L-threonine biosynthesis; L-threonine from L-aspartate: step 4/5.</text>
</comment>
<comment type="subcellular location">
    <subcellularLocation>
        <location evidence="1">Cytoplasm</location>
    </subcellularLocation>
</comment>
<comment type="similarity">
    <text evidence="1">Belongs to the GHMP kinase family. Homoserine kinase subfamily.</text>
</comment>
<gene>
    <name evidence="1" type="primary">thrB</name>
    <name type="ordered locus">CKO_03384</name>
</gene>
<protein>
    <recommendedName>
        <fullName evidence="1">Homoserine kinase</fullName>
        <shortName evidence="1">HK</shortName>
        <shortName evidence="1">HSK</shortName>
        <ecNumber evidence="1">2.7.1.39</ecNumber>
    </recommendedName>
</protein>
<proteinExistence type="inferred from homology"/>
<feature type="chain" id="PRO_1000049121" description="Homoserine kinase">
    <location>
        <begin position="1"/>
        <end position="309"/>
    </location>
</feature>
<feature type="binding site" evidence="1">
    <location>
        <begin position="91"/>
        <end position="101"/>
    </location>
    <ligand>
        <name>ATP</name>
        <dbReference type="ChEBI" id="CHEBI:30616"/>
    </ligand>
</feature>
<accession>A8ALV4</accession>
<dbReference type="EC" id="2.7.1.39" evidence="1"/>
<dbReference type="EMBL" id="CP000822">
    <property type="protein sequence ID" value="ABV14467.1"/>
    <property type="molecule type" value="Genomic_DNA"/>
</dbReference>
<dbReference type="RefSeq" id="WP_012134169.1">
    <property type="nucleotide sequence ID" value="NC_009792.1"/>
</dbReference>
<dbReference type="SMR" id="A8ALV4"/>
<dbReference type="STRING" id="290338.CKO_03384"/>
<dbReference type="GeneID" id="45137142"/>
<dbReference type="KEGG" id="cko:CKO_03384"/>
<dbReference type="HOGENOM" id="CLU_041243_1_1_6"/>
<dbReference type="OrthoDB" id="9769912at2"/>
<dbReference type="UniPathway" id="UPA00050">
    <property type="reaction ID" value="UER00064"/>
</dbReference>
<dbReference type="Proteomes" id="UP000008148">
    <property type="component" value="Chromosome"/>
</dbReference>
<dbReference type="GO" id="GO:0005737">
    <property type="term" value="C:cytoplasm"/>
    <property type="evidence" value="ECO:0007669"/>
    <property type="project" value="UniProtKB-SubCell"/>
</dbReference>
<dbReference type="GO" id="GO:0005524">
    <property type="term" value="F:ATP binding"/>
    <property type="evidence" value="ECO:0007669"/>
    <property type="project" value="UniProtKB-UniRule"/>
</dbReference>
<dbReference type="GO" id="GO:0004413">
    <property type="term" value="F:homoserine kinase activity"/>
    <property type="evidence" value="ECO:0007669"/>
    <property type="project" value="UniProtKB-UniRule"/>
</dbReference>
<dbReference type="GO" id="GO:0009088">
    <property type="term" value="P:threonine biosynthetic process"/>
    <property type="evidence" value="ECO:0007669"/>
    <property type="project" value="UniProtKB-UniRule"/>
</dbReference>
<dbReference type="FunFam" id="3.30.230.10:FF:000020">
    <property type="entry name" value="Homoserine kinase"/>
    <property type="match status" value="1"/>
</dbReference>
<dbReference type="FunFam" id="3.30.70.890:FF:000002">
    <property type="entry name" value="Homoserine kinase"/>
    <property type="match status" value="1"/>
</dbReference>
<dbReference type="Gene3D" id="3.30.230.10">
    <property type="match status" value="1"/>
</dbReference>
<dbReference type="Gene3D" id="3.30.70.890">
    <property type="entry name" value="GHMP kinase, C-terminal domain"/>
    <property type="match status" value="1"/>
</dbReference>
<dbReference type="HAMAP" id="MF_00384">
    <property type="entry name" value="Homoser_kinase"/>
    <property type="match status" value="1"/>
</dbReference>
<dbReference type="InterPro" id="IPR013750">
    <property type="entry name" value="GHMP_kinase_C_dom"/>
</dbReference>
<dbReference type="InterPro" id="IPR036554">
    <property type="entry name" value="GHMP_kinase_C_sf"/>
</dbReference>
<dbReference type="InterPro" id="IPR006204">
    <property type="entry name" value="GHMP_kinase_N_dom"/>
</dbReference>
<dbReference type="InterPro" id="IPR006203">
    <property type="entry name" value="GHMP_knse_ATP-bd_CS"/>
</dbReference>
<dbReference type="InterPro" id="IPR000870">
    <property type="entry name" value="Homoserine_kinase"/>
</dbReference>
<dbReference type="InterPro" id="IPR020568">
    <property type="entry name" value="Ribosomal_Su5_D2-typ_SF"/>
</dbReference>
<dbReference type="InterPro" id="IPR014721">
    <property type="entry name" value="Ribsml_uS5_D2-typ_fold_subgr"/>
</dbReference>
<dbReference type="NCBIfam" id="NF002288">
    <property type="entry name" value="PRK01212.1-4"/>
    <property type="match status" value="1"/>
</dbReference>
<dbReference type="NCBIfam" id="TIGR00191">
    <property type="entry name" value="thrB"/>
    <property type="match status" value="1"/>
</dbReference>
<dbReference type="PANTHER" id="PTHR20861:SF1">
    <property type="entry name" value="HOMOSERINE KINASE"/>
    <property type="match status" value="1"/>
</dbReference>
<dbReference type="PANTHER" id="PTHR20861">
    <property type="entry name" value="HOMOSERINE/4-DIPHOSPHOCYTIDYL-2-C-METHYL-D-ERYTHRITOL KINASE"/>
    <property type="match status" value="1"/>
</dbReference>
<dbReference type="Pfam" id="PF08544">
    <property type="entry name" value="GHMP_kinases_C"/>
    <property type="match status" value="1"/>
</dbReference>
<dbReference type="Pfam" id="PF00288">
    <property type="entry name" value="GHMP_kinases_N"/>
    <property type="match status" value="1"/>
</dbReference>
<dbReference type="PIRSF" id="PIRSF000676">
    <property type="entry name" value="Homoser_kin"/>
    <property type="match status" value="1"/>
</dbReference>
<dbReference type="PRINTS" id="PR00958">
    <property type="entry name" value="HOMSERKINASE"/>
</dbReference>
<dbReference type="SUPFAM" id="SSF55060">
    <property type="entry name" value="GHMP Kinase, C-terminal domain"/>
    <property type="match status" value="1"/>
</dbReference>
<dbReference type="SUPFAM" id="SSF54211">
    <property type="entry name" value="Ribosomal protein S5 domain 2-like"/>
    <property type="match status" value="1"/>
</dbReference>
<dbReference type="PROSITE" id="PS00627">
    <property type="entry name" value="GHMP_KINASES_ATP"/>
    <property type="match status" value="1"/>
</dbReference>
<evidence type="ECO:0000255" key="1">
    <source>
        <dbReference type="HAMAP-Rule" id="MF_00384"/>
    </source>
</evidence>
<name>KHSE_CITK8</name>
<keyword id="KW-0028">Amino-acid biosynthesis</keyword>
<keyword id="KW-0067">ATP-binding</keyword>
<keyword id="KW-0963">Cytoplasm</keyword>
<keyword id="KW-0418">Kinase</keyword>
<keyword id="KW-0547">Nucleotide-binding</keyword>
<keyword id="KW-1185">Reference proteome</keyword>
<keyword id="KW-0791">Threonine biosynthesis</keyword>
<keyword id="KW-0808">Transferase</keyword>
<organism>
    <name type="scientific">Citrobacter koseri (strain ATCC BAA-895 / CDC 4225-83 / SGSC4696)</name>
    <dbReference type="NCBI Taxonomy" id="290338"/>
    <lineage>
        <taxon>Bacteria</taxon>
        <taxon>Pseudomonadati</taxon>
        <taxon>Pseudomonadota</taxon>
        <taxon>Gammaproteobacteria</taxon>
        <taxon>Enterobacterales</taxon>
        <taxon>Enterobacteriaceae</taxon>
        <taxon>Citrobacter</taxon>
    </lineage>
</organism>